<protein>
    <recommendedName>
        <fullName>ATP-dependent DNA helicase RecG</fullName>
        <ecNumber evidence="1">5.6.2.4</ecNumber>
    </recommendedName>
    <alternativeName>
        <fullName>DNA branch migration protein RecG</fullName>
    </alternativeName>
    <alternativeName>
        <fullName>Probable DNA 3'-5' helicase RecG</fullName>
    </alternativeName>
</protein>
<sequence length="623" mass="71439">MQETDDLLKTLNVKSLLEALLVYTPKGYKDLSLLERFETGLSGVLEVGILEKKNYAKVLKIFAYSKRFYKNLELVFFNHSAFYYNQFKTGESLFIYGKLEQSSFNQAYIINTPKILTEFGKISLIFKKVKNHKKIQENLQKLLSLENLKKEGVKENVARLLLEIFFPTPHFVKDFETNKNFPSQHLNALKYIEMLFYMKNLERKKLQFNAKIACPNNSERLKAFIASLPFKLTRDQQNAIKEIQSDLTSPIACKRLIIGDVGCGKTMVILASMVLAYPNKTLLMAPTSILAKQLYHEALKFLPPYFEVELLLGGSHKKRSNHLFEKITHVVIGTQALLFDKRDLNEFALVITDEQHRFGTKQRYQLEKMASSKGNKPHSLQFSATPIPRTLALAKSAFVKTTMIREIPYPKEIETLVLHKREFKIVMEKISEEIAKNHQVIVVYPLVNKSEKIPYLSLSEGASFWQKRFKNIYTTSGQDKNKEEVIEEFRELGSILLATTLIEVGISLPRLSVIVILAPERLGLATLHQLRGRVSRNGLKGYCFLCTIQEENERLEKFADELDGFKIAELDLQYRKSGDLLQGGKQSGNSFEYIDLARDENIIAEVKQDFLKNASVSQGTFEN</sequence>
<name>RECG_HELPJ</name>
<reference key="1">
    <citation type="journal article" date="1999" name="Nature">
        <title>Genomic sequence comparison of two unrelated isolates of the human gastric pathogen Helicobacter pylori.</title>
        <authorList>
            <person name="Alm R.A."/>
            <person name="Ling L.-S.L."/>
            <person name="Moir D.T."/>
            <person name="King B.L."/>
            <person name="Brown E.D."/>
            <person name="Doig P.C."/>
            <person name="Smith D.R."/>
            <person name="Noonan B."/>
            <person name="Guild B.C."/>
            <person name="deJonge B.L."/>
            <person name="Carmel G."/>
            <person name="Tummino P.J."/>
            <person name="Caruso A."/>
            <person name="Uria-Nickelsen M."/>
            <person name="Mills D.M."/>
            <person name="Ives C."/>
            <person name="Gibson R."/>
            <person name="Merberg D."/>
            <person name="Mills S.D."/>
            <person name="Jiang Q."/>
            <person name="Taylor D.E."/>
            <person name="Vovis G.F."/>
            <person name="Trust T.J."/>
        </authorList>
    </citation>
    <scope>NUCLEOTIDE SEQUENCE [LARGE SCALE GENOMIC DNA]</scope>
    <source>
        <strain>J99 / ATCC 700824</strain>
    </source>
</reference>
<gene>
    <name type="primary">recG</name>
    <name type="ordered locus">jhp_1412</name>
</gene>
<feature type="chain" id="PRO_0000102144" description="ATP-dependent DNA helicase RecG">
    <location>
        <begin position="1"/>
        <end position="623"/>
    </location>
</feature>
<feature type="domain" description="Helicase ATP-binding" evidence="3">
    <location>
        <begin position="246"/>
        <end position="404"/>
    </location>
</feature>
<feature type="domain" description="Helicase C-terminal" evidence="4">
    <location>
        <begin position="422"/>
        <end position="578"/>
    </location>
</feature>
<feature type="region of interest" description="Wedge domain" evidence="2">
    <location>
        <begin position="32"/>
        <end position="120"/>
    </location>
</feature>
<feature type="short sequence motif" description="DEAH box" evidence="3">
    <location>
        <begin position="353"/>
        <end position="356"/>
    </location>
</feature>
<feature type="binding site" evidence="3">
    <location>
        <begin position="259"/>
        <end position="266"/>
    </location>
    <ligand>
        <name>ATP</name>
        <dbReference type="ChEBI" id="CHEBI:30616"/>
    </ligand>
</feature>
<proteinExistence type="inferred from homology"/>
<organism>
    <name type="scientific">Helicobacter pylori (strain J99 / ATCC 700824)</name>
    <name type="common">Campylobacter pylori J99</name>
    <dbReference type="NCBI Taxonomy" id="85963"/>
    <lineage>
        <taxon>Bacteria</taxon>
        <taxon>Pseudomonadati</taxon>
        <taxon>Campylobacterota</taxon>
        <taxon>Epsilonproteobacteria</taxon>
        <taxon>Campylobacterales</taxon>
        <taxon>Helicobacteraceae</taxon>
        <taxon>Helicobacter</taxon>
    </lineage>
</organism>
<keyword id="KW-0067">ATP-binding</keyword>
<keyword id="KW-0227">DNA damage</keyword>
<keyword id="KW-0233">DNA recombination</keyword>
<keyword id="KW-0234">DNA repair</keyword>
<keyword id="KW-0238">DNA-binding</keyword>
<keyword id="KW-0347">Helicase</keyword>
<keyword id="KW-0378">Hydrolase</keyword>
<keyword id="KW-0413">Isomerase</keyword>
<keyword id="KW-0547">Nucleotide-binding</keyword>
<accession>Q9ZJA1</accession>
<evidence type="ECO:0000250" key="1">
    <source>
        <dbReference type="UniProtKB" id="P24230"/>
    </source>
</evidence>
<evidence type="ECO:0000250" key="2">
    <source>
        <dbReference type="UniProtKB" id="Q9WY48"/>
    </source>
</evidence>
<evidence type="ECO:0000255" key="3">
    <source>
        <dbReference type="PROSITE-ProRule" id="PRU00541"/>
    </source>
</evidence>
<evidence type="ECO:0000255" key="4">
    <source>
        <dbReference type="PROSITE-ProRule" id="PRU00542"/>
    </source>
</evidence>
<evidence type="ECO:0000305" key="5"/>
<dbReference type="EC" id="5.6.2.4" evidence="1"/>
<dbReference type="EMBL" id="AE001439">
    <property type="protein sequence ID" value="AAD06990.1"/>
    <property type="molecule type" value="Genomic_DNA"/>
</dbReference>
<dbReference type="PIR" id="G71810">
    <property type="entry name" value="G71810"/>
</dbReference>
<dbReference type="RefSeq" id="WP_010882646.1">
    <property type="nucleotide sequence ID" value="NC_000921.1"/>
</dbReference>
<dbReference type="SMR" id="Q9ZJA1"/>
<dbReference type="KEGG" id="hpj:jhp_1412"/>
<dbReference type="eggNOG" id="COG1200">
    <property type="taxonomic scope" value="Bacteria"/>
</dbReference>
<dbReference type="Proteomes" id="UP000000804">
    <property type="component" value="Chromosome"/>
</dbReference>
<dbReference type="GO" id="GO:0005524">
    <property type="term" value="F:ATP binding"/>
    <property type="evidence" value="ECO:0007669"/>
    <property type="project" value="UniProtKB-KW"/>
</dbReference>
<dbReference type="GO" id="GO:0016887">
    <property type="term" value="F:ATP hydrolysis activity"/>
    <property type="evidence" value="ECO:0007669"/>
    <property type="project" value="RHEA"/>
</dbReference>
<dbReference type="GO" id="GO:0003677">
    <property type="term" value="F:DNA binding"/>
    <property type="evidence" value="ECO:0007669"/>
    <property type="project" value="UniProtKB-KW"/>
</dbReference>
<dbReference type="GO" id="GO:0003678">
    <property type="term" value="F:DNA helicase activity"/>
    <property type="evidence" value="ECO:0007669"/>
    <property type="project" value="TreeGrafter"/>
</dbReference>
<dbReference type="GO" id="GO:0006310">
    <property type="term" value="P:DNA recombination"/>
    <property type="evidence" value="ECO:0007669"/>
    <property type="project" value="UniProtKB-KW"/>
</dbReference>
<dbReference type="GO" id="GO:0006281">
    <property type="term" value="P:DNA repair"/>
    <property type="evidence" value="ECO:0007669"/>
    <property type="project" value="UniProtKB-KW"/>
</dbReference>
<dbReference type="Gene3D" id="3.40.50.300">
    <property type="entry name" value="P-loop containing nucleotide triphosphate hydrolases"/>
    <property type="match status" value="2"/>
</dbReference>
<dbReference type="InterPro" id="IPR011545">
    <property type="entry name" value="DEAD/DEAH_box_helicase_dom"/>
</dbReference>
<dbReference type="InterPro" id="IPR014001">
    <property type="entry name" value="Helicase_ATP-bd"/>
</dbReference>
<dbReference type="InterPro" id="IPR001650">
    <property type="entry name" value="Helicase_C-like"/>
</dbReference>
<dbReference type="InterPro" id="IPR027417">
    <property type="entry name" value="P-loop_NTPase"/>
</dbReference>
<dbReference type="InterPro" id="IPR047112">
    <property type="entry name" value="RecG/Mfd"/>
</dbReference>
<dbReference type="NCBIfam" id="NF008169">
    <property type="entry name" value="PRK10917.2-3"/>
    <property type="match status" value="1"/>
</dbReference>
<dbReference type="PANTHER" id="PTHR47964">
    <property type="entry name" value="ATP-DEPENDENT DNA HELICASE HOMOLOG RECG, CHLOROPLASTIC"/>
    <property type="match status" value="1"/>
</dbReference>
<dbReference type="PANTHER" id="PTHR47964:SF1">
    <property type="entry name" value="ATP-DEPENDENT DNA HELICASE HOMOLOG RECG, CHLOROPLASTIC"/>
    <property type="match status" value="1"/>
</dbReference>
<dbReference type="Pfam" id="PF00270">
    <property type="entry name" value="DEAD"/>
    <property type="match status" value="1"/>
</dbReference>
<dbReference type="Pfam" id="PF00271">
    <property type="entry name" value="Helicase_C"/>
    <property type="match status" value="1"/>
</dbReference>
<dbReference type="SMART" id="SM00487">
    <property type="entry name" value="DEXDc"/>
    <property type="match status" value="1"/>
</dbReference>
<dbReference type="SMART" id="SM00490">
    <property type="entry name" value="HELICc"/>
    <property type="match status" value="1"/>
</dbReference>
<dbReference type="SUPFAM" id="SSF52540">
    <property type="entry name" value="P-loop containing nucleoside triphosphate hydrolases"/>
    <property type="match status" value="2"/>
</dbReference>
<dbReference type="PROSITE" id="PS51192">
    <property type="entry name" value="HELICASE_ATP_BIND_1"/>
    <property type="match status" value="1"/>
</dbReference>
<dbReference type="PROSITE" id="PS51194">
    <property type="entry name" value="HELICASE_CTER"/>
    <property type="match status" value="1"/>
</dbReference>
<comment type="function">
    <text evidence="1">Plays a critical role in recombination and DNA repair. Helps process Holliday junction intermediates to mature products by catalyzing branch migration. Has replication fork regression activity, unwinds stalled or blocked replication forks to make a HJ that can be resolved. Has a DNA unwinding activity characteristic of a DNA helicase with 3'-5' polarity (By similarity).</text>
</comment>
<comment type="catalytic activity">
    <reaction evidence="1">
        <text>Couples ATP hydrolysis with the unwinding of duplex DNA by translocating in the 3'-5' direction.</text>
        <dbReference type="EC" id="5.6.2.4"/>
    </reaction>
</comment>
<comment type="catalytic activity">
    <reaction evidence="1">
        <text>ATP + H2O = ADP + phosphate + H(+)</text>
        <dbReference type="Rhea" id="RHEA:13065"/>
        <dbReference type="ChEBI" id="CHEBI:15377"/>
        <dbReference type="ChEBI" id="CHEBI:15378"/>
        <dbReference type="ChEBI" id="CHEBI:30616"/>
        <dbReference type="ChEBI" id="CHEBI:43474"/>
        <dbReference type="ChEBI" id="CHEBI:456216"/>
        <dbReference type="EC" id="5.6.2.4"/>
    </reaction>
</comment>
<comment type="subunit">
    <text evidence="2">Monomer (By similarity).</text>
</comment>
<comment type="domain">
    <text evidence="2">The wedge domain within the N-terminus inserts into the replication fork junction, where the lagging and leading strand split (By similarity).</text>
</comment>
<comment type="similarity">
    <text evidence="5">Belongs to the helicase family. RecG subfamily.</text>
</comment>